<comment type="function">
    <text evidence="1">Catalyzes the reversible cleavage of pseudouridine 5'-phosphate (PsiMP) to ribose 5-phosphate and uracil. Functions biologically in the cleavage direction, as part of a pseudouridine degradation pathway.</text>
</comment>
<comment type="catalytic activity">
    <reaction evidence="1">
        <text>D-ribose 5-phosphate + uracil = psi-UMP + H2O</text>
        <dbReference type="Rhea" id="RHEA:18337"/>
        <dbReference type="ChEBI" id="CHEBI:15377"/>
        <dbReference type="ChEBI" id="CHEBI:17568"/>
        <dbReference type="ChEBI" id="CHEBI:58380"/>
        <dbReference type="ChEBI" id="CHEBI:78346"/>
        <dbReference type="EC" id="4.2.1.70"/>
    </reaction>
</comment>
<comment type="cofactor">
    <cofactor evidence="1">
        <name>Mn(2+)</name>
        <dbReference type="ChEBI" id="CHEBI:29035"/>
    </cofactor>
    <text evidence="1">Binds 1 Mn(2+) ion per subunit.</text>
</comment>
<comment type="subunit">
    <text evidence="1">Homotrimer.</text>
</comment>
<comment type="similarity">
    <text evidence="1">Belongs to the pseudouridine-5'-phosphate glycosidase family.</text>
</comment>
<name>PSUG_RHOCS</name>
<feature type="chain" id="PRO_0000390541" description="Pseudouridine-5'-phosphate glycosidase">
    <location>
        <begin position="1"/>
        <end position="320"/>
    </location>
</feature>
<feature type="active site" description="Proton donor" evidence="1">
    <location>
        <position position="25"/>
    </location>
</feature>
<feature type="active site" description="Nucleophile" evidence="1">
    <location>
        <position position="158"/>
    </location>
</feature>
<feature type="binding site" evidence="1">
    <location>
        <position position="85"/>
    </location>
    <ligand>
        <name>substrate</name>
    </ligand>
</feature>
<feature type="binding site" evidence="1">
    <location>
        <position position="105"/>
    </location>
    <ligand>
        <name>substrate</name>
    </ligand>
</feature>
<feature type="binding site" evidence="1">
    <location>
        <position position="137"/>
    </location>
    <ligand>
        <name>Mn(2+)</name>
        <dbReference type="ChEBI" id="CHEBI:29035"/>
    </ligand>
</feature>
<feature type="binding site" evidence="1">
    <location>
        <begin position="139"/>
        <end position="141"/>
    </location>
    <ligand>
        <name>substrate</name>
    </ligand>
</feature>
<sequence length="320" mass="32693">MHDFLSIHPEVAAALKAGRPVVALESTLISHGLPAPANLETAQAIEAAVRANGAVPATIAVLDGRIRVGLDAEDMQRLAAPGTAKVSRRDLPLVLAKGADGATTVAATMIAADLAGIAVFATGGIGGVHRGVETTGDISADLEELATTSVAVVCAGAKAILDLPRTLEYLETRGVPVVGFGTDAFPAFYHRDSGLPVDGRCDTPEDAARVLNAKWRLGLAGGIVVAVPIPDEAALDAAQAEAAVQQAVAEAATGGVRGKALTPFLLHRLETLTGGASLTANRALLLNNAAVGARIAVAYARLKQETTLPKKPPPSKRPTY</sequence>
<reference key="1">
    <citation type="submission" date="2007-03" db="EMBL/GenBank/DDBJ databases">
        <title>Genome sequence of Rhodospirillum centenum.</title>
        <authorList>
            <person name="Touchman J.W."/>
            <person name="Bauer C."/>
            <person name="Blankenship R.E."/>
        </authorList>
    </citation>
    <scope>NUCLEOTIDE SEQUENCE [LARGE SCALE GENOMIC DNA]</scope>
    <source>
        <strain>ATCC 51521 / SW</strain>
    </source>
</reference>
<keyword id="KW-0326">Glycosidase</keyword>
<keyword id="KW-0378">Hydrolase</keyword>
<keyword id="KW-0456">Lyase</keyword>
<keyword id="KW-0464">Manganese</keyword>
<keyword id="KW-0479">Metal-binding</keyword>
<keyword id="KW-1185">Reference proteome</keyword>
<accession>B6IRJ4</accession>
<evidence type="ECO:0000255" key="1">
    <source>
        <dbReference type="HAMAP-Rule" id="MF_01876"/>
    </source>
</evidence>
<protein>
    <recommendedName>
        <fullName evidence="1">Pseudouridine-5'-phosphate glycosidase</fullName>
        <shortName evidence="1">PsiMP glycosidase</shortName>
        <ecNumber evidence="1">4.2.1.70</ecNumber>
    </recommendedName>
</protein>
<proteinExistence type="inferred from homology"/>
<organism>
    <name type="scientific">Rhodospirillum centenum (strain ATCC 51521 / SW)</name>
    <dbReference type="NCBI Taxonomy" id="414684"/>
    <lineage>
        <taxon>Bacteria</taxon>
        <taxon>Pseudomonadati</taxon>
        <taxon>Pseudomonadota</taxon>
        <taxon>Alphaproteobacteria</taxon>
        <taxon>Rhodospirillales</taxon>
        <taxon>Rhodospirillaceae</taxon>
        <taxon>Rhodospirillum</taxon>
    </lineage>
</organism>
<dbReference type="EC" id="4.2.1.70" evidence="1"/>
<dbReference type="EMBL" id="CP000613">
    <property type="protein sequence ID" value="ACI98080.1"/>
    <property type="molecule type" value="Genomic_DNA"/>
</dbReference>
<dbReference type="RefSeq" id="WP_012565872.1">
    <property type="nucleotide sequence ID" value="NC_011420.2"/>
</dbReference>
<dbReference type="SMR" id="B6IRJ4"/>
<dbReference type="STRING" id="414684.RC1_0645"/>
<dbReference type="KEGG" id="rce:RC1_0645"/>
<dbReference type="eggNOG" id="COG2313">
    <property type="taxonomic scope" value="Bacteria"/>
</dbReference>
<dbReference type="HOGENOM" id="CLU_012201_0_1_5"/>
<dbReference type="OrthoDB" id="9805870at2"/>
<dbReference type="Proteomes" id="UP000001591">
    <property type="component" value="Chromosome"/>
</dbReference>
<dbReference type="GO" id="GO:0005737">
    <property type="term" value="C:cytoplasm"/>
    <property type="evidence" value="ECO:0007669"/>
    <property type="project" value="TreeGrafter"/>
</dbReference>
<dbReference type="GO" id="GO:0016798">
    <property type="term" value="F:hydrolase activity, acting on glycosyl bonds"/>
    <property type="evidence" value="ECO:0007669"/>
    <property type="project" value="UniProtKB-KW"/>
</dbReference>
<dbReference type="GO" id="GO:0046872">
    <property type="term" value="F:metal ion binding"/>
    <property type="evidence" value="ECO:0007669"/>
    <property type="project" value="UniProtKB-KW"/>
</dbReference>
<dbReference type="GO" id="GO:0004730">
    <property type="term" value="F:pseudouridylate synthase activity"/>
    <property type="evidence" value="ECO:0007669"/>
    <property type="project" value="UniProtKB-UniRule"/>
</dbReference>
<dbReference type="GO" id="GO:0046113">
    <property type="term" value="P:nucleobase catabolic process"/>
    <property type="evidence" value="ECO:0007669"/>
    <property type="project" value="UniProtKB-UniRule"/>
</dbReference>
<dbReference type="Gene3D" id="3.40.1790.10">
    <property type="entry name" value="Indigoidine synthase domain"/>
    <property type="match status" value="1"/>
</dbReference>
<dbReference type="HAMAP" id="MF_01876">
    <property type="entry name" value="PsiMP_glycosidase"/>
    <property type="match status" value="1"/>
</dbReference>
<dbReference type="InterPro" id="IPR022830">
    <property type="entry name" value="Indigdn_synthA-like"/>
</dbReference>
<dbReference type="InterPro" id="IPR007342">
    <property type="entry name" value="PsuG"/>
</dbReference>
<dbReference type="PANTHER" id="PTHR42909:SF1">
    <property type="entry name" value="CARBOHYDRATE KINASE PFKB DOMAIN-CONTAINING PROTEIN"/>
    <property type="match status" value="1"/>
</dbReference>
<dbReference type="PANTHER" id="PTHR42909">
    <property type="entry name" value="ZGC:136858"/>
    <property type="match status" value="1"/>
</dbReference>
<dbReference type="Pfam" id="PF04227">
    <property type="entry name" value="Indigoidine_A"/>
    <property type="match status" value="1"/>
</dbReference>
<dbReference type="SUPFAM" id="SSF110581">
    <property type="entry name" value="Indigoidine synthase A-like"/>
    <property type="match status" value="1"/>
</dbReference>
<gene>
    <name evidence="1" type="primary">psuG</name>
    <name type="ordered locus">RC1_0645</name>
</gene>